<sequence>MAIYSQVPWTLPRYKFEVKVHPLAATSNLQPDDGYKIELRAENTVDKYPAKQHARRVAAQIRQGLGLIFLMGQKSTLHEDSDQERSLRQRRYFFYLSGVDEADCDLTYDIKTDKLTLYVPDFDLRRAIWMGPTLERKAALRKFDVDEVNYHSALDEDVKKWAKNQDTGSTIYLLHGSQGPAENPPNVTIDSKALKLAMDACRVIKDEHEIQLIRRANDISAAAHLEILRGIKSMSNESHIEGSFLNTSVSLGAHKQAYQIIAASGSNAATLHYSKNNEPLKGRQFVCLDAGAEWNCYASDVTRTFPITHQWPSIEAKQIYQLVQEMQESCIALVKEGVRYLDLHFLAHSILIKGFLTLGIFKGGTLDEVKKSGASLLFFPHGLGHHIGLEVHDVSPQSIMAQGINDDSNNILILPTCVSPCTTSSPALISGMVITIEPGIYFSQLALDNAKPEQLKYIDMARVKNYMAVGGVRIEDDILVTKTGYENLTKVPKGDDMLEIIRQGKKGNDSPCVDRPTW</sequence>
<reference key="1">
    <citation type="submission" date="2009-05" db="EMBL/GenBank/DDBJ databases">
        <title>The genome sequence of Ajellomyces capsulatus strain H143.</title>
        <authorList>
            <person name="Champion M."/>
            <person name="Cuomo C.A."/>
            <person name="Ma L.-J."/>
            <person name="Henn M.R."/>
            <person name="Sil A."/>
            <person name="Goldman B."/>
            <person name="Young S.K."/>
            <person name="Kodira C.D."/>
            <person name="Zeng Q."/>
            <person name="Koehrsen M."/>
            <person name="Alvarado L."/>
            <person name="Berlin A.M."/>
            <person name="Borenstein D."/>
            <person name="Chen Z."/>
            <person name="Engels R."/>
            <person name="Freedman E."/>
            <person name="Gellesch M."/>
            <person name="Goldberg J."/>
            <person name="Griggs A."/>
            <person name="Gujja S."/>
            <person name="Heiman D.I."/>
            <person name="Hepburn T.A."/>
            <person name="Howarth C."/>
            <person name="Jen D."/>
            <person name="Larson L."/>
            <person name="Lewis B."/>
            <person name="Mehta T."/>
            <person name="Park D."/>
            <person name="Pearson M."/>
            <person name="Roberts A."/>
            <person name="Saif S."/>
            <person name="Shea T.D."/>
            <person name="Shenoy N."/>
            <person name="Sisk P."/>
            <person name="Stolte C."/>
            <person name="Sykes S."/>
            <person name="Walk T."/>
            <person name="White J."/>
            <person name="Yandava C."/>
            <person name="Klein B."/>
            <person name="McEwen J.G."/>
            <person name="Puccia R."/>
            <person name="Goldman G.H."/>
            <person name="Felipe M.S."/>
            <person name="Nino-Vega G."/>
            <person name="San-Blas G."/>
            <person name="Taylor J.W."/>
            <person name="Mendoza L."/>
            <person name="Galagan J.E."/>
            <person name="Nusbaum C."/>
            <person name="Birren B.W."/>
        </authorList>
    </citation>
    <scope>NUCLEOTIDE SEQUENCE [LARGE SCALE GENOMIC DNA]</scope>
    <source>
        <strain>H143</strain>
    </source>
</reference>
<comment type="function">
    <text evidence="1">Catalyzes the removal of a penultimate prolyl residue from the N-termini of peptides.</text>
</comment>
<comment type="catalytic activity">
    <reaction>
        <text>Release of any N-terminal amino acid, including proline, that is linked to proline, even from a dipeptide or tripeptide.</text>
        <dbReference type="EC" id="3.4.11.9"/>
    </reaction>
</comment>
<comment type="cofactor">
    <cofactor evidence="1">
        <name>Mn(2+)</name>
        <dbReference type="ChEBI" id="CHEBI:29035"/>
    </cofactor>
    <text evidence="1">Binds 2 manganese ions per subunit.</text>
</comment>
<comment type="similarity">
    <text evidence="2">Belongs to the peptidase M24B family.</text>
</comment>
<keyword id="KW-0031">Aminopeptidase</keyword>
<keyword id="KW-0378">Hydrolase</keyword>
<keyword id="KW-0464">Manganese</keyword>
<keyword id="KW-0479">Metal-binding</keyword>
<keyword id="KW-0482">Metalloprotease</keyword>
<keyword id="KW-0645">Protease</keyword>
<keyword id="KW-1185">Reference proteome</keyword>
<name>AMPP2_AJECH</name>
<proteinExistence type="inferred from homology"/>
<organism>
    <name type="scientific">Ajellomyces capsulatus (strain H143)</name>
    <name type="common">Darling's disease fungus</name>
    <name type="synonym">Histoplasma capsulatum</name>
    <dbReference type="NCBI Taxonomy" id="544712"/>
    <lineage>
        <taxon>Eukaryota</taxon>
        <taxon>Fungi</taxon>
        <taxon>Dikarya</taxon>
        <taxon>Ascomycota</taxon>
        <taxon>Pezizomycotina</taxon>
        <taxon>Eurotiomycetes</taxon>
        <taxon>Eurotiomycetidae</taxon>
        <taxon>Onygenales</taxon>
        <taxon>Ajellomycetaceae</taxon>
        <taxon>Histoplasma</taxon>
    </lineage>
</organism>
<gene>
    <name type="ORF">HCDG_07916</name>
</gene>
<feature type="chain" id="PRO_0000411816" description="Probable Xaa-Pro aminopeptidase HCDG_07916">
    <location>
        <begin position="1"/>
        <end position="518"/>
    </location>
</feature>
<feature type="binding site" evidence="1">
    <location>
        <position position="289"/>
    </location>
    <ligand>
        <name>Mn(2+)</name>
        <dbReference type="ChEBI" id="CHEBI:29035"/>
        <label>2</label>
    </ligand>
</feature>
<feature type="binding site" evidence="1">
    <location>
        <position position="300"/>
    </location>
    <ligand>
        <name>Mn(2+)</name>
        <dbReference type="ChEBI" id="CHEBI:29035"/>
        <label>1</label>
    </ligand>
</feature>
<feature type="binding site" evidence="1">
    <location>
        <position position="300"/>
    </location>
    <ligand>
        <name>Mn(2+)</name>
        <dbReference type="ChEBI" id="CHEBI:29035"/>
        <label>2</label>
    </ligand>
</feature>
<feature type="binding site" evidence="1">
    <location>
        <position position="437"/>
    </location>
    <ligand>
        <name>Mn(2+)</name>
        <dbReference type="ChEBI" id="CHEBI:29035"/>
        <label>1</label>
    </ligand>
</feature>
<feature type="binding site" evidence="1">
    <location>
        <position position="475"/>
    </location>
    <ligand>
        <name>Mn(2+)</name>
        <dbReference type="ChEBI" id="CHEBI:29035"/>
        <label>1</label>
    </ligand>
</feature>
<feature type="binding site" evidence="1">
    <location>
        <position position="475"/>
    </location>
    <ligand>
        <name>Mn(2+)</name>
        <dbReference type="ChEBI" id="CHEBI:29035"/>
        <label>2</label>
    </ligand>
</feature>
<evidence type="ECO:0000250" key="1"/>
<evidence type="ECO:0000305" key="2"/>
<dbReference type="EC" id="3.4.11.9"/>
<dbReference type="EMBL" id="GG692432">
    <property type="protein sequence ID" value="EER38181.1"/>
    <property type="molecule type" value="Genomic_DNA"/>
</dbReference>
<dbReference type="SMR" id="C6HNY5"/>
<dbReference type="STRING" id="544712.C6HNY5"/>
<dbReference type="VEuPathDB" id="FungiDB:HCDG_07916"/>
<dbReference type="eggNOG" id="KOG2737">
    <property type="taxonomic scope" value="Eukaryota"/>
</dbReference>
<dbReference type="HOGENOM" id="CLU_017266_1_2_1"/>
<dbReference type="OMA" id="YELRMIR"/>
<dbReference type="OrthoDB" id="966at299071"/>
<dbReference type="Proteomes" id="UP000002624">
    <property type="component" value="Unassembled WGS sequence"/>
</dbReference>
<dbReference type="GO" id="GO:0030145">
    <property type="term" value="F:manganese ion binding"/>
    <property type="evidence" value="ECO:0007669"/>
    <property type="project" value="InterPro"/>
</dbReference>
<dbReference type="GO" id="GO:0070006">
    <property type="term" value="F:metalloaminopeptidase activity"/>
    <property type="evidence" value="ECO:0007669"/>
    <property type="project" value="InterPro"/>
</dbReference>
<dbReference type="GO" id="GO:0006508">
    <property type="term" value="P:proteolysis"/>
    <property type="evidence" value="ECO:0007669"/>
    <property type="project" value="UniProtKB-KW"/>
</dbReference>
<dbReference type="CDD" id="cd01087">
    <property type="entry name" value="Prolidase"/>
    <property type="match status" value="1"/>
</dbReference>
<dbReference type="Gene3D" id="3.90.230.10">
    <property type="entry name" value="Creatinase/methionine aminopeptidase superfamily"/>
    <property type="match status" value="1"/>
</dbReference>
<dbReference type="Gene3D" id="3.40.350.10">
    <property type="entry name" value="Creatinase/prolidase N-terminal domain"/>
    <property type="match status" value="1"/>
</dbReference>
<dbReference type="InterPro" id="IPR007865">
    <property type="entry name" value="Aminopep_P_N"/>
</dbReference>
<dbReference type="InterPro" id="IPR029149">
    <property type="entry name" value="Creatin/AminoP/Spt16_N"/>
</dbReference>
<dbReference type="InterPro" id="IPR036005">
    <property type="entry name" value="Creatinase/aminopeptidase-like"/>
</dbReference>
<dbReference type="InterPro" id="IPR000994">
    <property type="entry name" value="Pept_M24"/>
</dbReference>
<dbReference type="InterPro" id="IPR001131">
    <property type="entry name" value="Peptidase_M24B_aminopep-P_CS"/>
</dbReference>
<dbReference type="InterPro" id="IPR052433">
    <property type="entry name" value="X-Pro_dipept-like"/>
</dbReference>
<dbReference type="PANTHER" id="PTHR43226">
    <property type="entry name" value="XAA-PRO AMINOPEPTIDASE 3"/>
    <property type="match status" value="1"/>
</dbReference>
<dbReference type="PANTHER" id="PTHR43226:SF3">
    <property type="entry name" value="XAA-PRO AMINOPEPTIDASE AN0832-RELATED"/>
    <property type="match status" value="1"/>
</dbReference>
<dbReference type="Pfam" id="PF05195">
    <property type="entry name" value="AMP_N"/>
    <property type="match status" value="1"/>
</dbReference>
<dbReference type="Pfam" id="PF00557">
    <property type="entry name" value="Peptidase_M24"/>
    <property type="match status" value="1"/>
</dbReference>
<dbReference type="SMART" id="SM01011">
    <property type="entry name" value="AMP_N"/>
    <property type="match status" value="1"/>
</dbReference>
<dbReference type="SUPFAM" id="SSF55920">
    <property type="entry name" value="Creatinase/aminopeptidase"/>
    <property type="match status" value="1"/>
</dbReference>
<dbReference type="SUPFAM" id="SSF53092">
    <property type="entry name" value="Creatinase/prolidase N-terminal domain"/>
    <property type="match status" value="1"/>
</dbReference>
<dbReference type="PROSITE" id="PS00491">
    <property type="entry name" value="PROLINE_PEPTIDASE"/>
    <property type="match status" value="1"/>
</dbReference>
<accession>C6HNY5</accession>
<protein>
    <recommendedName>
        <fullName>Probable Xaa-Pro aminopeptidase HCDG_07916</fullName>
        <ecNumber>3.4.11.9</ecNumber>
    </recommendedName>
    <alternativeName>
        <fullName>Aminoacylproline aminopeptidase</fullName>
    </alternativeName>
    <alternativeName>
        <fullName>Prolidase</fullName>
    </alternativeName>
</protein>